<comment type="function">
    <text evidence="1">Catalyzes the catabolism of the allantoin degradation intermediate (S)-ureidoglycolate, generating urea and glyoxylate. Involved in the utilization of allantoin as nitrogen source.</text>
</comment>
<comment type="catalytic activity">
    <reaction evidence="1">
        <text>(S)-ureidoglycolate = urea + glyoxylate</text>
        <dbReference type="Rhea" id="RHEA:11304"/>
        <dbReference type="ChEBI" id="CHEBI:16199"/>
        <dbReference type="ChEBI" id="CHEBI:36655"/>
        <dbReference type="ChEBI" id="CHEBI:57296"/>
        <dbReference type="EC" id="4.3.2.3"/>
    </reaction>
</comment>
<comment type="cofactor">
    <cofactor evidence="1">
        <name>Ni(2+)</name>
        <dbReference type="ChEBI" id="CHEBI:49786"/>
    </cofactor>
</comment>
<comment type="pathway">
    <text evidence="1">Nitrogen metabolism; (S)-allantoin degradation.</text>
</comment>
<comment type="subunit">
    <text evidence="1">Homodimer.</text>
</comment>
<comment type="similarity">
    <text evidence="1">Belongs to the ureidoglycolate lyase family.</text>
</comment>
<organism>
    <name type="scientific">Pseudomonas entomophila (strain L48)</name>
    <dbReference type="NCBI Taxonomy" id="384676"/>
    <lineage>
        <taxon>Bacteria</taxon>
        <taxon>Pseudomonadati</taxon>
        <taxon>Pseudomonadota</taxon>
        <taxon>Gammaproteobacteria</taxon>
        <taxon>Pseudomonadales</taxon>
        <taxon>Pseudomonadaceae</taxon>
        <taxon>Pseudomonas</taxon>
    </lineage>
</organism>
<evidence type="ECO:0000255" key="1">
    <source>
        <dbReference type="HAMAP-Rule" id="MF_00616"/>
    </source>
</evidence>
<gene>
    <name evidence="1" type="primary">allA</name>
    <name type="ordered locus">PSEEN1683</name>
</gene>
<name>ALLA_PSEE4</name>
<dbReference type="EC" id="4.3.2.3" evidence="1"/>
<dbReference type="EMBL" id="CT573326">
    <property type="protein sequence ID" value="CAK14533.1"/>
    <property type="molecule type" value="Genomic_DNA"/>
</dbReference>
<dbReference type="RefSeq" id="WP_011532943.1">
    <property type="nucleotide sequence ID" value="NC_008027.1"/>
</dbReference>
<dbReference type="SMR" id="Q1ICT0"/>
<dbReference type="STRING" id="384676.PSEEN1683"/>
<dbReference type="KEGG" id="pen:PSEEN1683"/>
<dbReference type="eggNOG" id="COG3194">
    <property type="taxonomic scope" value="Bacteria"/>
</dbReference>
<dbReference type="HOGENOM" id="CLU_070848_1_0_6"/>
<dbReference type="OrthoDB" id="9804602at2"/>
<dbReference type="UniPathway" id="UPA00395"/>
<dbReference type="Proteomes" id="UP000000658">
    <property type="component" value="Chromosome"/>
</dbReference>
<dbReference type="GO" id="GO:0004848">
    <property type="term" value="F:ureidoglycolate hydrolase activity"/>
    <property type="evidence" value="ECO:0007669"/>
    <property type="project" value="InterPro"/>
</dbReference>
<dbReference type="GO" id="GO:0050385">
    <property type="term" value="F:ureidoglycolate lyase activity"/>
    <property type="evidence" value="ECO:0007669"/>
    <property type="project" value="UniProtKB-UniRule"/>
</dbReference>
<dbReference type="GO" id="GO:0000256">
    <property type="term" value="P:allantoin catabolic process"/>
    <property type="evidence" value="ECO:0007669"/>
    <property type="project" value="UniProtKB-UniRule"/>
</dbReference>
<dbReference type="GO" id="GO:0006145">
    <property type="term" value="P:purine nucleobase catabolic process"/>
    <property type="evidence" value="ECO:0007669"/>
    <property type="project" value="UniProtKB-UniRule"/>
</dbReference>
<dbReference type="CDD" id="cd20298">
    <property type="entry name" value="cupin_UAH"/>
    <property type="match status" value="1"/>
</dbReference>
<dbReference type="Gene3D" id="2.60.120.480">
    <property type="entry name" value="Ureidoglycolate hydrolase"/>
    <property type="match status" value="1"/>
</dbReference>
<dbReference type="HAMAP" id="MF_00616">
    <property type="entry name" value="Ureidogly_lyase"/>
    <property type="match status" value="1"/>
</dbReference>
<dbReference type="InterPro" id="IPR011051">
    <property type="entry name" value="RmlC_Cupin_sf"/>
</dbReference>
<dbReference type="InterPro" id="IPR047233">
    <property type="entry name" value="UAH_cupin"/>
</dbReference>
<dbReference type="InterPro" id="IPR007247">
    <property type="entry name" value="Ureidogly_lyase"/>
</dbReference>
<dbReference type="InterPro" id="IPR023525">
    <property type="entry name" value="Ureidogly_lyase_bac"/>
</dbReference>
<dbReference type="InterPro" id="IPR024060">
    <property type="entry name" value="Ureidoglycolate_lyase_dom_sf"/>
</dbReference>
<dbReference type="NCBIfam" id="NF002949">
    <property type="entry name" value="PRK03606.1-2"/>
    <property type="match status" value="1"/>
</dbReference>
<dbReference type="NCBIfam" id="NF009932">
    <property type="entry name" value="PRK13395.1"/>
    <property type="match status" value="1"/>
</dbReference>
<dbReference type="PANTHER" id="PTHR21221">
    <property type="entry name" value="UREIDOGLYCOLATE HYDROLASE"/>
    <property type="match status" value="1"/>
</dbReference>
<dbReference type="PANTHER" id="PTHR21221:SF1">
    <property type="entry name" value="UREIDOGLYCOLATE LYASE"/>
    <property type="match status" value="1"/>
</dbReference>
<dbReference type="Pfam" id="PF04115">
    <property type="entry name" value="Ureidogly_lyase"/>
    <property type="match status" value="1"/>
</dbReference>
<dbReference type="PIRSF" id="PIRSF017306">
    <property type="entry name" value="Ureidogly_hydro"/>
    <property type="match status" value="1"/>
</dbReference>
<dbReference type="SUPFAM" id="SSF51182">
    <property type="entry name" value="RmlC-like cupins"/>
    <property type="match status" value="1"/>
</dbReference>
<accession>Q1ICT0</accession>
<protein>
    <recommendedName>
        <fullName evidence="1">Ureidoglycolate lyase</fullName>
        <ecNumber evidence="1">4.3.2.3</ecNumber>
    </recommendedName>
    <alternativeName>
        <fullName evidence="1">Ureidoglycolatase</fullName>
    </alternativeName>
</protein>
<keyword id="KW-0456">Lyase</keyword>
<keyword id="KW-0659">Purine metabolism</keyword>
<reference key="1">
    <citation type="journal article" date="2006" name="Nat. Biotechnol.">
        <title>Complete genome sequence of the entomopathogenic and metabolically versatile soil bacterium Pseudomonas entomophila.</title>
        <authorList>
            <person name="Vodovar N."/>
            <person name="Vallenet D."/>
            <person name="Cruveiller S."/>
            <person name="Rouy Z."/>
            <person name="Barbe V."/>
            <person name="Acosta C."/>
            <person name="Cattolico L."/>
            <person name="Jubin C."/>
            <person name="Lajus A."/>
            <person name="Segurens B."/>
            <person name="Vacherie B."/>
            <person name="Wincker P."/>
            <person name="Weissenbach J."/>
            <person name="Lemaitre B."/>
            <person name="Medigue C."/>
            <person name="Boccard F."/>
        </authorList>
    </citation>
    <scope>NUCLEOTIDE SEQUENCE [LARGE SCALE GENOMIC DNA]</scope>
    <source>
        <strain>L48</strain>
    </source>
</reference>
<sequence>MRTLMIEPLTKEAFAPFGDVIETDGSDHFMINNGSTMRFHKLATVETAEPEDKAIISIFRADALEMPLTVRMLERHPLGSQAFIPLLGNPFLIVVAPVGDAPVSGLVRAFRSNGRQGVNYHRGVWHHPVLTIEKRDDFLVVDRSGSGNNCDEHYFPEEQMLILNPHQ</sequence>
<feature type="chain" id="PRO_1000061361" description="Ureidoglycolate lyase">
    <location>
        <begin position="1"/>
        <end position="167"/>
    </location>
</feature>
<proteinExistence type="inferred from homology"/>